<feature type="chain" id="PRO_1000164496" description="Purine ribonucleoside efflux pump NepI">
    <location>
        <begin position="1"/>
        <end position="396"/>
    </location>
</feature>
<feature type="topological domain" description="Cytoplasmic" evidence="1">
    <location>
        <begin position="1"/>
        <end position="21"/>
    </location>
</feature>
<feature type="transmembrane region" description="Helical" evidence="1">
    <location>
        <begin position="22"/>
        <end position="42"/>
    </location>
</feature>
<feature type="topological domain" description="Periplasmic" evidence="1">
    <location>
        <begin position="43"/>
        <end position="54"/>
    </location>
</feature>
<feature type="transmembrane region" description="Helical" evidence="1">
    <location>
        <begin position="55"/>
        <end position="75"/>
    </location>
</feature>
<feature type="topological domain" description="Cytoplasmic" evidence="1">
    <location>
        <begin position="76"/>
        <end position="85"/>
    </location>
</feature>
<feature type="transmembrane region" description="Helical" evidence="1">
    <location>
        <begin position="86"/>
        <end position="106"/>
    </location>
</feature>
<feature type="topological domain" description="Periplasmic" evidence="1">
    <location>
        <position position="107"/>
    </location>
</feature>
<feature type="transmembrane region" description="Helical" evidence="1">
    <location>
        <begin position="108"/>
        <end position="128"/>
    </location>
</feature>
<feature type="topological domain" description="Cytoplasmic" evidence="1">
    <location>
        <begin position="129"/>
        <end position="147"/>
    </location>
</feature>
<feature type="transmembrane region" description="Helical" evidence="1">
    <location>
        <begin position="148"/>
        <end position="168"/>
    </location>
</feature>
<feature type="topological domain" description="Periplasmic" evidence="1">
    <location>
        <begin position="169"/>
        <end position="175"/>
    </location>
</feature>
<feature type="transmembrane region" description="Helical" evidence="1">
    <location>
        <begin position="176"/>
        <end position="196"/>
    </location>
</feature>
<feature type="topological domain" description="Cytoplasmic" evidence="1">
    <location>
        <begin position="197"/>
        <end position="215"/>
    </location>
</feature>
<feature type="transmembrane region" description="Helical" evidence="1">
    <location>
        <begin position="216"/>
        <end position="236"/>
    </location>
</feature>
<feature type="topological domain" description="Periplasmic" evidence="1">
    <location>
        <begin position="237"/>
        <end position="255"/>
    </location>
</feature>
<feature type="transmembrane region" description="Helical" evidence="1">
    <location>
        <begin position="256"/>
        <end position="276"/>
    </location>
</feature>
<feature type="topological domain" description="Cytoplasmic" evidence="1">
    <location>
        <begin position="277"/>
        <end position="281"/>
    </location>
</feature>
<feature type="transmembrane region" description="Helical" evidence="1">
    <location>
        <begin position="282"/>
        <end position="302"/>
    </location>
</feature>
<feature type="topological domain" description="Periplasmic" evidence="1">
    <location>
        <begin position="303"/>
        <end position="305"/>
    </location>
</feature>
<feature type="transmembrane region" description="Helical" evidence="1">
    <location>
        <begin position="306"/>
        <end position="326"/>
    </location>
</feature>
<feature type="topological domain" description="Cytoplasmic" evidence="1">
    <location>
        <begin position="327"/>
        <end position="343"/>
    </location>
</feature>
<feature type="transmembrane region" description="Helical" evidence="1">
    <location>
        <begin position="344"/>
        <end position="364"/>
    </location>
</feature>
<feature type="topological domain" description="Periplasmic" evidence="1">
    <location>
        <begin position="365"/>
        <end position="366"/>
    </location>
</feature>
<feature type="transmembrane region" description="Helical" evidence="1">
    <location>
        <begin position="367"/>
        <end position="387"/>
    </location>
</feature>
<feature type="topological domain" description="Cytoplasmic" evidence="1">
    <location>
        <begin position="388"/>
        <end position="396"/>
    </location>
</feature>
<proteinExistence type="inferred from homology"/>
<organism>
    <name type="scientific">Escherichia coli O127:H6 (strain E2348/69 / EPEC)</name>
    <dbReference type="NCBI Taxonomy" id="574521"/>
    <lineage>
        <taxon>Bacteria</taxon>
        <taxon>Pseudomonadati</taxon>
        <taxon>Pseudomonadota</taxon>
        <taxon>Gammaproteobacteria</taxon>
        <taxon>Enterobacterales</taxon>
        <taxon>Enterobacteriaceae</taxon>
        <taxon>Escherichia</taxon>
    </lineage>
</organism>
<protein>
    <recommendedName>
        <fullName evidence="1">Purine ribonucleoside efflux pump NepI</fullName>
    </recommendedName>
</protein>
<comment type="function">
    <text evidence="1">Involved in the efflux of purine ribonucleosides, such as inosine and guanosine.</text>
</comment>
<comment type="catalytic activity">
    <reaction evidence="1">
        <text>inosine(in) + H(+)(out) = inosine(out) + H(+)(in)</text>
        <dbReference type="Rhea" id="RHEA:29211"/>
        <dbReference type="ChEBI" id="CHEBI:15378"/>
        <dbReference type="ChEBI" id="CHEBI:17596"/>
    </reaction>
    <physiologicalReaction direction="left-to-right" evidence="1">
        <dbReference type="Rhea" id="RHEA:29212"/>
    </physiologicalReaction>
</comment>
<comment type="catalytic activity">
    <reaction evidence="1">
        <text>guanosine(in) + H(+)(out) = guanosine(out) + H(+)(in)</text>
        <dbReference type="Rhea" id="RHEA:29583"/>
        <dbReference type="ChEBI" id="CHEBI:15378"/>
        <dbReference type="ChEBI" id="CHEBI:16750"/>
    </reaction>
    <physiologicalReaction direction="left-to-right" evidence="1">
        <dbReference type="Rhea" id="RHEA:29584"/>
    </physiologicalReaction>
</comment>
<comment type="subcellular location">
    <subcellularLocation>
        <location evidence="1">Cell inner membrane</location>
        <topology evidence="1">Multi-pass membrane protein</topology>
    </subcellularLocation>
</comment>
<comment type="similarity">
    <text evidence="1">Belongs to the major facilitator superfamily. DHA1 family. NepI (TC 2.A.1.2.26) subfamily.</text>
</comment>
<gene>
    <name evidence="1" type="primary">nepI</name>
    <name type="ordered locus">E2348C_3977</name>
</gene>
<name>NEPI_ECO27</name>
<accession>B7UMD5</accession>
<reference key="1">
    <citation type="journal article" date="2009" name="J. Bacteriol.">
        <title>Complete genome sequence and comparative genome analysis of enteropathogenic Escherichia coli O127:H6 strain E2348/69.</title>
        <authorList>
            <person name="Iguchi A."/>
            <person name="Thomson N.R."/>
            <person name="Ogura Y."/>
            <person name="Saunders D."/>
            <person name="Ooka T."/>
            <person name="Henderson I.R."/>
            <person name="Harris D."/>
            <person name="Asadulghani M."/>
            <person name="Kurokawa K."/>
            <person name="Dean P."/>
            <person name="Kenny B."/>
            <person name="Quail M.A."/>
            <person name="Thurston S."/>
            <person name="Dougan G."/>
            <person name="Hayashi T."/>
            <person name="Parkhill J."/>
            <person name="Frankel G."/>
        </authorList>
    </citation>
    <scope>NUCLEOTIDE SEQUENCE [LARGE SCALE GENOMIC DNA]</scope>
    <source>
        <strain>E2348/69 / EPEC</strain>
    </source>
</reference>
<keyword id="KW-0050">Antiport</keyword>
<keyword id="KW-0997">Cell inner membrane</keyword>
<keyword id="KW-1003">Cell membrane</keyword>
<keyword id="KW-0472">Membrane</keyword>
<keyword id="KW-1185">Reference proteome</keyword>
<keyword id="KW-0812">Transmembrane</keyword>
<keyword id="KW-1133">Transmembrane helix</keyword>
<keyword id="KW-0813">Transport</keyword>
<sequence>MSEFIAENRGADAITRPNWSAVFSVAFCVACLIIVEFLPVSLLTPMAQDLGISEGVAGQSVTVTAFVAMFASLFITQTIQATDRRYVVILFAVLLTLSCLLVSFANSFSLLLIGRACLGLALGGFWAISASLTMRLVPPRTVPKALSVIFGAVSIALVIAAPLGGFLGELIGWRNVFNAAAAMGVLCIFWIIKSLPSLPGEPSHQKQNTFRLLQRPGVMAGMIAIFMSFAGQFAFFTYIRPVYMNLAGFGVDGLTLVLLSFGIASFVGTSLSSFILKRSVKLALAGAPFVLALSALVLTLWGSDKIVATGVAIIWGLTFALIPVGWSTWITRSLADQAEKAGSIQVAVIQLANTCGAAIGGYALDNIGLTSPLMLSGTLMLLTALLVTAKVKMKKS</sequence>
<evidence type="ECO:0000255" key="1">
    <source>
        <dbReference type="HAMAP-Rule" id="MF_01189"/>
    </source>
</evidence>
<dbReference type="EMBL" id="FM180568">
    <property type="protein sequence ID" value="CAS11525.1"/>
    <property type="molecule type" value="Genomic_DNA"/>
</dbReference>
<dbReference type="RefSeq" id="WP_001339875.1">
    <property type="nucleotide sequence ID" value="NC_011601.1"/>
</dbReference>
<dbReference type="SMR" id="B7UMD5"/>
<dbReference type="KEGG" id="ecg:E2348C_3977"/>
<dbReference type="HOGENOM" id="CLU_001265_61_1_6"/>
<dbReference type="Proteomes" id="UP000008205">
    <property type="component" value="Chromosome"/>
</dbReference>
<dbReference type="GO" id="GO:0005886">
    <property type="term" value="C:plasma membrane"/>
    <property type="evidence" value="ECO:0007669"/>
    <property type="project" value="UniProtKB-SubCell"/>
</dbReference>
<dbReference type="GO" id="GO:0015297">
    <property type="term" value="F:antiporter activity"/>
    <property type="evidence" value="ECO:0007669"/>
    <property type="project" value="UniProtKB-KW"/>
</dbReference>
<dbReference type="GO" id="GO:0015211">
    <property type="term" value="F:purine nucleoside transmembrane transporter activity"/>
    <property type="evidence" value="ECO:0007669"/>
    <property type="project" value="UniProtKB-UniRule"/>
</dbReference>
<dbReference type="CDD" id="cd17324">
    <property type="entry name" value="MFS_NepI_like"/>
    <property type="match status" value="1"/>
</dbReference>
<dbReference type="FunFam" id="1.20.1250.20:FF:000113">
    <property type="entry name" value="Purine ribonucleoside efflux pump NepI"/>
    <property type="match status" value="1"/>
</dbReference>
<dbReference type="Gene3D" id="1.20.1250.20">
    <property type="entry name" value="MFS general substrate transporter like domains"/>
    <property type="match status" value="1"/>
</dbReference>
<dbReference type="HAMAP" id="MF_01189">
    <property type="entry name" value="MFS_NepI"/>
    <property type="match status" value="1"/>
</dbReference>
<dbReference type="InterPro" id="IPR011701">
    <property type="entry name" value="MFS"/>
</dbReference>
<dbReference type="InterPro" id="IPR020846">
    <property type="entry name" value="MFS_dom"/>
</dbReference>
<dbReference type="InterPro" id="IPR050189">
    <property type="entry name" value="MFS_Efflux_Transporters"/>
</dbReference>
<dbReference type="InterPro" id="IPR023680">
    <property type="entry name" value="MFS_NepI"/>
</dbReference>
<dbReference type="InterPro" id="IPR036259">
    <property type="entry name" value="MFS_trans_sf"/>
</dbReference>
<dbReference type="NCBIfam" id="NF007578">
    <property type="entry name" value="PRK10213.1"/>
    <property type="match status" value="1"/>
</dbReference>
<dbReference type="PANTHER" id="PTHR43124">
    <property type="entry name" value="PURINE EFFLUX PUMP PBUE"/>
    <property type="match status" value="1"/>
</dbReference>
<dbReference type="PANTHER" id="PTHR43124:SF5">
    <property type="entry name" value="PURINE RIBONUCLEOSIDE EFFLUX PUMP NEPI"/>
    <property type="match status" value="1"/>
</dbReference>
<dbReference type="Pfam" id="PF07690">
    <property type="entry name" value="MFS_1"/>
    <property type="match status" value="1"/>
</dbReference>
<dbReference type="SUPFAM" id="SSF103473">
    <property type="entry name" value="MFS general substrate transporter"/>
    <property type="match status" value="1"/>
</dbReference>
<dbReference type="PROSITE" id="PS50850">
    <property type="entry name" value="MFS"/>
    <property type="match status" value="1"/>
</dbReference>